<evidence type="ECO:0000255" key="1">
    <source>
        <dbReference type="HAMAP-Rule" id="MF_00360"/>
    </source>
</evidence>
<evidence type="ECO:0000305" key="2"/>
<reference key="1">
    <citation type="journal article" date="2003" name="Appl. Microbiol. Biotechnol.">
        <title>The Corynebacterium glutamicum genome: features and impacts on biotechnological processes.</title>
        <authorList>
            <person name="Ikeda M."/>
            <person name="Nakagawa S."/>
        </authorList>
    </citation>
    <scope>NUCLEOTIDE SEQUENCE [LARGE SCALE GENOMIC DNA]</scope>
    <source>
        <strain>ATCC 13032 / DSM 20300 / JCM 1318 / BCRC 11384 / CCUG 27702 / LMG 3730 / NBRC 12168 / NCIMB 10025 / NRRL B-2784 / 534</strain>
    </source>
</reference>
<reference key="2">
    <citation type="journal article" date="2003" name="J. Biotechnol.">
        <title>The complete Corynebacterium glutamicum ATCC 13032 genome sequence and its impact on the production of L-aspartate-derived amino acids and vitamins.</title>
        <authorList>
            <person name="Kalinowski J."/>
            <person name="Bathe B."/>
            <person name="Bartels D."/>
            <person name="Bischoff N."/>
            <person name="Bott M."/>
            <person name="Burkovski A."/>
            <person name="Dusch N."/>
            <person name="Eggeling L."/>
            <person name="Eikmanns B.J."/>
            <person name="Gaigalat L."/>
            <person name="Goesmann A."/>
            <person name="Hartmann M."/>
            <person name="Huthmacher K."/>
            <person name="Kraemer R."/>
            <person name="Linke B."/>
            <person name="McHardy A.C."/>
            <person name="Meyer F."/>
            <person name="Moeckel B."/>
            <person name="Pfefferle W."/>
            <person name="Puehler A."/>
            <person name="Rey D.A."/>
            <person name="Rueckert C."/>
            <person name="Rupp O."/>
            <person name="Sahm H."/>
            <person name="Wendisch V.F."/>
            <person name="Wiegraebe I."/>
            <person name="Tauch A."/>
        </authorList>
    </citation>
    <scope>NUCLEOTIDE SEQUENCE [LARGE SCALE GENOMIC DNA]</scope>
    <source>
        <strain>ATCC 13032 / DSM 20300 / JCM 1318 / BCRC 11384 / CCUG 27702 / LMG 3730 / NBRC 12168 / NCIMB 10025 / NRRL B-2784 / 534</strain>
    </source>
</reference>
<accession>Q8NLF9</accession>
<sequence>MRQYELMIILDPSQDERTVAPSLDKFLEVVRKDKGDVVKVDVWGKRRLAYPIDKKEEGVYAVVDLKCESATVLELDRVLNLNDGVLRTKVLRLDK</sequence>
<organism>
    <name type="scientific">Corynebacterium glutamicum (strain ATCC 13032 / DSM 20300 / JCM 1318 / BCRC 11384 / CCUG 27702 / LMG 3730 / NBRC 12168 / NCIMB 10025 / NRRL B-2784 / 534)</name>
    <dbReference type="NCBI Taxonomy" id="196627"/>
    <lineage>
        <taxon>Bacteria</taxon>
        <taxon>Bacillati</taxon>
        <taxon>Actinomycetota</taxon>
        <taxon>Actinomycetes</taxon>
        <taxon>Mycobacteriales</taxon>
        <taxon>Corynebacteriaceae</taxon>
        <taxon>Corynebacterium</taxon>
    </lineage>
</organism>
<feature type="chain" id="PRO_0000176759" description="Small ribosomal subunit protein bS6">
    <location>
        <begin position="1"/>
        <end position="95"/>
    </location>
</feature>
<dbReference type="EMBL" id="BA000036">
    <property type="protein sequence ID" value="BAC00377.1"/>
    <property type="molecule type" value="Genomic_DNA"/>
</dbReference>
<dbReference type="EMBL" id="BX927157">
    <property type="protein sequence ID" value="CAF18922.1"/>
    <property type="molecule type" value="Genomic_DNA"/>
</dbReference>
<dbReference type="RefSeq" id="NP_602178.1">
    <property type="nucleotide sequence ID" value="NC_003450.3"/>
</dbReference>
<dbReference type="RefSeq" id="WP_003855074.1">
    <property type="nucleotide sequence ID" value="NC_006958.1"/>
</dbReference>
<dbReference type="SMR" id="Q8NLF9"/>
<dbReference type="STRING" id="196627.cg3308"/>
<dbReference type="GeneID" id="1020925"/>
<dbReference type="KEGG" id="cgb:cg3308"/>
<dbReference type="KEGG" id="cgl:Cgl2983"/>
<dbReference type="PATRIC" id="fig|196627.13.peg.2916"/>
<dbReference type="eggNOG" id="COG0360">
    <property type="taxonomic scope" value="Bacteria"/>
</dbReference>
<dbReference type="HOGENOM" id="CLU_113441_5_3_11"/>
<dbReference type="OrthoDB" id="9812702at2"/>
<dbReference type="BioCyc" id="CORYNE:G18NG-12604-MONOMER"/>
<dbReference type="Proteomes" id="UP000000582">
    <property type="component" value="Chromosome"/>
</dbReference>
<dbReference type="Proteomes" id="UP000001009">
    <property type="component" value="Chromosome"/>
</dbReference>
<dbReference type="GO" id="GO:0005737">
    <property type="term" value="C:cytoplasm"/>
    <property type="evidence" value="ECO:0007669"/>
    <property type="project" value="UniProtKB-ARBA"/>
</dbReference>
<dbReference type="GO" id="GO:1990904">
    <property type="term" value="C:ribonucleoprotein complex"/>
    <property type="evidence" value="ECO:0007669"/>
    <property type="project" value="UniProtKB-KW"/>
</dbReference>
<dbReference type="GO" id="GO:0005840">
    <property type="term" value="C:ribosome"/>
    <property type="evidence" value="ECO:0007669"/>
    <property type="project" value="UniProtKB-KW"/>
</dbReference>
<dbReference type="GO" id="GO:0070181">
    <property type="term" value="F:small ribosomal subunit rRNA binding"/>
    <property type="evidence" value="ECO:0007669"/>
    <property type="project" value="TreeGrafter"/>
</dbReference>
<dbReference type="GO" id="GO:0003735">
    <property type="term" value="F:structural constituent of ribosome"/>
    <property type="evidence" value="ECO:0007669"/>
    <property type="project" value="InterPro"/>
</dbReference>
<dbReference type="GO" id="GO:0006412">
    <property type="term" value="P:translation"/>
    <property type="evidence" value="ECO:0007669"/>
    <property type="project" value="UniProtKB-UniRule"/>
</dbReference>
<dbReference type="CDD" id="cd00473">
    <property type="entry name" value="bS6"/>
    <property type="match status" value="1"/>
</dbReference>
<dbReference type="FunFam" id="3.30.70.60:FF:000002">
    <property type="entry name" value="30S ribosomal protein S6"/>
    <property type="match status" value="1"/>
</dbReference>
<dbReference type="Gene3D" id="3.30.70.60">
    <property type="match status" value="1"/>
</dbReference>
<dbReference type="HAMAP" id="MF_00360">
    <property type="entry name" value="Ribosomal_bS6"/>
    <property type="match status" value="1"/>
</dbReference>
<dbReference type="InterPro" id="IPR000529">
    <property type="entry name" value="Ribosomal_bS6"/>
</dbReference>
<dbReference type="InterPro" id="IPR035980">
    <property type="entry name" value="Ribosomal_bS6_sf"/>
</dbReference>
<dbReference type="InterPro" id="IPR020814">
    <property type="entry name" value="Ribosomal_S6_plastid/chlpt"/>
</dbReference>
<dbReference type="InterPro" id="IPR014717">
    <property type="entry name" value="Transl_elong_EF1B/ribsomal_bS6"/>
</dbReference>
<dbReference type="NCBIfam" id="TIGR00166">
    <property type="entry name" value="S6"/>
    <property type="match status" value="1"/>
</dbReference>
<dbReference type="PANTHER" id="PTHR21011">
    <property type="entry name" value="MITOCHONDRIAL 28S RIBOSOMAL PROTEIN S6"/>
    <property type="match status" value="1"/>
</dbReference>
<dbReference type="PANTHER" id="PTHR21011:SF1">
    <property type="entry name" value="SMALL RIBOSOMAL SUBUNIT PROTEIN BS6M"/>
    <property type="match status" value="1"/>
</dbReference>
<dbReference type="Pfam" id="PF01250">
    <property type="entry name" value="Ribosomal_S6"/>
    <property type="match status" value="1"/>
</dbReference>
<dbReference type="SUPFAM" id="SSF54995">
    <property type="entry name" value="Ribosomal protein S6"/>
    <property type="match status" value="1"/>
</dbReference>
<gene>
    <name evidence="1" type="primary">rpsF</name>
    <name type="ordered locus">Cgl2983</name>
    <name type="ordered locus">cg3308</name>
</gene>
<comment type="function">
    <text evidence="1">Binds together with bS18 to 16S ribosomal RNA.</text>
</comment>
<comment type="similarity">
    <text evidence="1">Belongs to the bacterial ribosomal protein bS6 family.</text>
</comment>
<proteinExistence type="inferred from homology"/>
<keyword id="KW-1185">Reference proteome</keyword>
<keyword id="KW-0687">Ribonucleoprotein</keyword>
<keyword id="KW-0689">Ribosomal protein</keyword>
<keyword id="KW-0694">RNA-binding</keyword>
<keyword id="KW-0699">rRNA-binding</keyword>
<name>RS6_CORGL</name>
<protein>
    <recommendedName>
        <fullName evidence="1">Small ribosomal subunit protein bS6</fullName>
    </recommendedName>
    <alternativeName>
        <fullName evidence="2">30S ribosomal protein S6</fullName>
    </alternativeName>
</protein>